<comment type="function">
    <text evidence="1">Catalyzes the ultimate step of the pyrrolysine biosynthesis pathway by converting the isopeptide (3R)-3-methyl-D-ornithyl-N(6)-L-lysine to the 22nd proteinogenic amino acid.</text>
</comment>
<comment type="catalytic activity">
    <reaction evidence="1">
        <text>(3R)-3-methyl-D-ornithyl-N(6)-L-lysine + NAD(+) = L-pyrrolysine + NH4(+) + NADH + 2 H(+)</text>
        <dbReference type="Rhea" id="RHEA:79083"/>
        <dbReference type="ChEBI" id="CHEBI:15378"/>
        <dbReference type="ChEBI" id="CHEBI:28938"/>
        <dbReference type="ChEBI" id="CHEBI:57540"/>
        <dbReference type="ChEBI" id="CHEBI:57945"/>
        <dbReference type="ChEBI" id="CHEBI:58499"/>
        <dbReference type="ChEBI" id="CHEBI:64643"/>
    </reaction>
    <physiologicalReaction direction="left-to-right" evidence="1">
        <dbReference type="Rhea" id="RHEA:79084"/>
    </physiologicalReaction>
</comment>
<comment type="pathway">
    <text evidence="2 3">Amino-acid biosynthesis; L-pyrrolysine biosynthesis.</text>
</comment>
<comment type="disruption phenotype">
    <text evidence="2">Cells lacking this gene are unable to translate UAG as pyrrolysine, and do not produce pyrrolysine.</text>
</comment>
<comment type="similarity">
    <text evidence="4">Belongs to the PylD family.</text>
</comment>
<reference key="1">
    <citation type="journal article" date="2002" name="Genome Res.">
        <title>The genome of Methanosarcina acetivorans reveals extensive metabolic and physiological diversity.</title>
        <authorList>
            <person name="Galagan J.E."/>
            <person name="Nusbaum C."/>
            <person name="Roy A."/>
            <person name="Endrizzi M.G."/>
            <person name="Macdonald P."/>
            <person name="FitzHugh W."/>
            <person name="Calvo S."/>
            <person name="Engels R."/>
            <person name="Smirnov S."/>
            <person name="Atnoor D."/>
            <person name="Brown A."/>
            <person name="Allen N."/>
            <person name="Naylor J."/>
            <person name="Stange-Thomann N."/>
            <person name="DeArellano K."/>
            <person name="Johnson R."/>
            <person name="Linton L."/>
            <person name="McEwan P."/>
            <person name="McKernan K."/>
            <person name="Talamas J."/>
            <person name="Tirrell A."/>
            <person name="Ye W."/>
            <person name="Zimmer A."/>
            <person name="Barber R.D."/>
            <person name="Cann I."/>
            <person name="Graham D.E."/>
            <person name="Grahame D.A."/>
            <person name="Guss A.M."/>
            <person name="Hedderich R."/>
            <person name="Ingram-Smith C."/>
            <person name="Kuettner H.C."/>
            <person name="Krzycki J.A."/>
            <person name="Leigh J.A."/>
            <person name="Li W."/>
            <person name="Liu J."/>
            <person name="Mukhopadhyay B."/>
            <person name="Reeve J.N."/>
            <person name="Smith K."/>
            <person name="Springer T.A."/>
            <person name="Umayam L.A."/>
            <person name="White O."/>
            <person name="White R.H."/>
            <person name="de Macario E.C."/>
            <person name="Ferry J.G."/>
            <person name="Jarrell K.F."/>
            <person name="Jing H."/>
            <person name="Macario A.J.L."/>
            <person name="Paulsen I.T."/>
            <person name="Pritchett M."/>
            <person name="Sowers K.R."/>
            <person name="Swanson R.V."/>
            <person name="Zinder S.H."/>
            <person name="Lander E."/>
            <person name="Metcalf W.W."/>
            <person name="Birren B."/>
        </authorList>
    </citation>
    <scope>NUCLEOTIDE SEQUENCE [LARGE SCALE GENOMIC DNA]</scope>
    <source>
        <strain>ATCC 35395 / DSM 2834 / JCM 12185 / C2A</strain>
    </source>
</reference>
<reference key="2">
    <citation type="journal article" date="2007" name="Proc. Natl. Acad. Sci. U.S.A.">
        <title>A natural genetic code expansion cassette enables transmissible biosynthesis and genetic encoding of pyrrolysine.</title>
        <authorList>
            <person name="Longstaff D.G."/>
            <person name="Larue R.C."/>
            <person name="Faust J.E."/>
            <person name="Mahapatra A."/>
            <person name="Zhang L."/>
            <person name="Green-Church K.B."/>
            <person name="Krzycki J.A."/>
        </authorList>
    </citation>
    <scope>FUNCTION IN PYRROLYSINE BIOSYNTHESIS</scope>
    <scope>GENE NAME</scope>
    <scope>DISRUPTION PHENOTYPE</scope>
    <scope>PATHWAY</scope>
    <source>
        <strain>ATCC 35395 / DSM 2834 / JCM 12185 / C2A</strain>
    </source>
</reference>
<reference key="3">
    <citation type="journal article" date="2011" name="Nature">
        <title>The complete biosynthesis of the genetically encoded amino acid pyrrolysine from lysine.</title>
        <authorList>
            <person name="Gaston M.A."/>
            <person name="Zhang L."/>
            <person name="Green-Church K.B."/>
            <person name="Krzycki J.A."/>
        </authorList>
    </citation>
    <scope>PATHWAY</scope>
    <source>
        <strain>ATCC 35395 / DSM 2834 / JCM 12185 / C2A</strain>
    </source>
</reference>
<proteinExistence type="evidence at protein level"/>
<evidence type="ECO:0000250" key="1">
    <source>
        <dbReference type="UniProtKB" id="Q46E80"/>
    </source>
</evidence>
<evidence type="ECO:0000269" key="2">
    <source>
    </source>
</evidence>
<evidence type="ECO:0000269" key="3">
    <source>
    </source>
</evidence>
<evidence type="ECO:0000305" key="4"/>
<organism>
    <name type="scientific">Methanosarcina acetivorans (strain ATCC 35395 / DSM 2834 / JCM 12185 / C2A)</name>
    <dbReference type="NCBI Taxonomy" id="188937"/>
    <lineage>
        <taxon>Archaea</taxon>
        <taxon>Methanobacteriati</taxon>
        <taxon>Methanobacteriota</taxon>
        <taxon>Stenosarchaea group</taxon>
        <taxon>Methanomicrobia</taxon>
        <taxon>Methanosarcinales</taxon>
        <taxon>Methanosarcinaceae</taxon>
        <taxon>Methanosarcina</taxon>
    </lineage>
</organism>
<accession>Q8TUC1</accession>
<dbReference type="EC" id="1.4.1.-" evidence="1"/>
<dbReference type="EMBL" id="AE010299">
    <property type="protein sequence ID" value="AAM03605.1"/>
    <property type="molecule type" value="Genomic_DNA"/>
</dbReference>
<dbReference type="RefSeq" id="WP_011020210.1">
    <property type="nucleotide sequence ID" value="NC_003552.1"/>
</dbReference>
<dbReference type="SMR" id="Q8TUC1"/>
<dbReference type="STRING" id="188937.MA_0152"/>
<dbReference type="EnsemblBacteria" id="AAM03605">
    <property type="protein sequence ID" value="AAM03605"/>
    <property type="gene ID" value="MA_0152"/>
</dbReference>
<dbReference type="GeneID" id="1472044"/>
<dbReference type="KEGG" id="mac:MA_0152"/>
<dbReference type="HOGENOM" id="CLU_089249_0_0_2"/>
<dbReference type="InParanoid" id="Q8TUC1"/>
<dbReference type="OrthoDB" id="122788at2157"/>
<dbReference type="UniPathway" id="UPA01028"/>
<dbReference type="Proteomes" id="UP000002487">
    <property type="component" value="Chromosome"/>
</dbReference>
<dbReference type="GO" id="GO:0016491">
    <property type="term" value="F:oxidoreductase activity"/>
    <property type="evidence" value="ECO:0007669"/>
    <property type="project" value="UniProtKB-KW"/>
</dbReference>
<dbReference type="GO" id="GO:0071524">
    <property type="term" value="P:pyrrolysine biosynthetic process"/>
    <property type="evidence" value="ECO:0000315"/>
    <property type="project" value="UniProtKB"/>
</dbReference>
<dbReference type="Gene3D" id="3.40.50.12150">
    <property type="match status" value="1"/>
</dbReference>
<dbReference type="Gene3D" id="3.40.50.720">
    <property type="entry name" value="NAD(P)-binding Rossmann-like Domain"/>
    <property type="match status" value="1"/>
</dbReference>
<dbReference type="InterPro" id="IPR048757">
    <property type="entry name" value="PylD_N"/>
</dbReference>
<dbReference type="InterPro" id="IPR023914">
    <property type="entry name" value="Pyrrolys_PylD"/>
</dbReference>
<dbReference type="NCBIfam" id="TIGR03911">
    <property type="entry name" value="pyrrolys_PylD"/>
    <property type="match status" value="1"/>
</dbReference>
<dbReference type="Pfam" id="PF21455">
    <property type="entry name" value="PylD_N"/>
    <property type="match status" value="1"/>
</dbReference>
<dbReference type="SUPFAM" id="SSF51984">
    <property type="entry name" value="MurCD N-terminal domain"/>
    <property type="match status" value="1"/>
</dbReference>
<feature type="chain" id="PRO_0000420352" description="Pyrrolysine synthase">
    <location>
        <begin position="1"/>
        <end position="259"/>
    </location>
</feature>
<feature type="binding site" evidence="1">
    <location>
        <position position="4"/>
    </location>
    <ligand>
        <name>L-pyrrolysine</name>
        <dbReference type="ChEBI" id="CHEBI:58499"/>
    </ligand>
</feature>
<feature type="binding site" evidence="1">
    <location>
        <position position="53"/>
    </location>
    <ligand>
        <name>L-pyrrolysine</name>
        <dbReference type="ChEBI" id="CHEBI:58499"/>
    </ligand>
</feature>
<feature type="binding site" evidence="1">
    <location>
        <position position="60"/>
    </location>
    <ligand>
        <name>L-pyrrolysine</name>
        <dbReference type="ChEBI" id="CHEBI:58499"/>
    </ligand>
</feature>
<feature type="binding site" evidence="1">
    <location>
        <position position="103"/>
    </location>
    <ligand>
        <name>L-pyrrolysine</name>
        <dbReference type="ChEBI" id="CHEBI:58499"/>
    </ligand>
</feature>
<feature type="binding site" evidence="1">
    <location>
        <position position="151"/>
    </location>
    <ligand>
        <name>NAD(+)</name>
        <dbReference type="ChEBI" id="CHEBI:57540"/>
    </ligand>
</feature>
<feature type="binding site" evidence="1">
    <location>
        <position position="152"/>
    </location>
    <ligand>
        <name>NAD(+)</name>
        <dbReference type="ChEBI" id="CHEBI:57540"/>
    </ligand>
</feature>
<feature type="binding site" evidence="1">
    <location>
        <position position="171"/>
    </location>
    <ligand>
        <name>NAD(+)</name>
        <dbReference type="ChEBI" id="CHEBI:57540"/>
    </ligand>
</feature>
<feature type="binding site" evidence="1">
    <location>
        <position position="206"/>
    </location>
    <ligand>
        <name>NAD(+)</name>
        <dbReference type="ChEBI" id="CHEBI:57540"/>
    </ligand>
</feature>
<feature type="binding site" evidence="1">
    <location>
        <position position="224"/>
    </location>
    <ligand>
        <name>NAD(+)</name>
        <dbReference type="ChEBI" id="CHEBI:57540"/>
    </ligand>
</feature>
<feature type="binding site" evidence="1">
    <location>
        <position position="226"/>
    </location>
    <ligand>
        <name>NAD(+)</name>
        <dbReference type="ChEBI" id="CHEBI:57540"/>
    </ligand>
</feature>
<feature type="binding site" evidence="1">
    <location>
        <position position="245"/>
    </location>
    <ligand>
        <name>NAD(+)</name>
        <dbReference type="ChEBI" id="CHEBI:57540"/>
    </ligand>
</feature>
<keyword id="KW-0028">Amino-acid biosynthesis</keyword>
<keyword id="KW-0520">NAD</keyword>
<keyword id="KW-0560">Oxidoreductase</keyword>
<keyword id="KW-1185">Reference proteome</keyword>
<name>PYLD_METAC</name>
<protein>
    <recommendedName>
        <fullName evidence="1">Pyrrolysine synthase</fullName>
        <ecNumber evidence="1">1.4.1.-</ecNumber>
    </recommendedName>
    <alternativeName>
        <fullName>Pyrrolysine biosynthesis protein PylD</fullName>
    </alternativeName>
</protein>
<gene>
    <name type="primary">pylD</name>
    <name type="ordered locus">MA_0152</name>
</gene>
<sequence length="259" mass="28048">MALLTPEDLENINRQLHEADSTVRRVTGLDIKGVCKDFYGTTPCCEKVGIVPVTSGNGIIGNFSESLRAITEYFGFDSFVTTMPDVSGYYEAVRNGAQIILMADDNTFLAHNLKNGKIANNQPCTGIIYAEIASRYMKADSKDVLAVGLGKVGFPGAAHLVNKGFRVYGYDADKALLEKTVSDLGITPFEPENPRRFSIIFEATPCADTVPESVISDNCVISTPGIPCAISRELQEKYGVELIMEPLGIGTASMLYSIL</sequence>